<name>LYS1_YEAST</name>
<dbReference type="EC" id="1.5.1.7" evidence="3 12 13"/>
<dbReference type="EMBL" id="X77362">
    <property type="protein sequence ID" value="CAA54551.1"/>
    <property type="molecule type" value="Genomic_DNA"/>
</dbReference>
<dbReference type="EMBL" id="Z38061">
    <property type="protein sequence ID" value="CAA86194.1"/>
    <property type="molecule type" value="Genomic_DNA"/>
</dbReference>
<dbReference type="EMBL" id="BK006942">
    <property type="protein sequence ID" value="DAA08581.1"/>
    <property type="molecule type" value="Genomic_DNA"/>
</dbReference>
<dbReference type="PIR" id="S48496">
    <property type="entry name" value="S48496"/>
</dbReference>
<dbReference type="RefSeq" id="NP_012300.3">
    <property type="nucleotide sequence ID" value="NM_001179556.3"/>
</dbReference>
<dbReference type="PDB" id="2Q99">
    <property type="method" value="X-ray"/>
    <property type="resolution" value="1.64 A"/>
    <property type="chains" value="A=1-373"/>
</dbReference>
<dbReference type="PDB" id="2QRJ">
    <property type="method" value="X-ray"/>
    <property type="resolution" value="1.60 A"/>
    <property type="chains" value="A=1-373"/>
</dbReference>
<dbReference type="PDB" id="2QRK">
    <property type="method" value="X-ray"/>
    <property type="resolution" value="1.75 A"/>
    <property type="chains" value="A=1-373"/>
</dbReference>
<dbReference type="PDB" id="2QRL">
    <property type="method" value="X-ray"/>
    <property type="resolution" value="1.60 A"/>
    <property type="chains" value="A=1-373"/>
</dbReference>
<dbReference type="PDB" id="3UGK">
    <property type="method" value="X-ray"/>
    <property type="resolution" value="2.01 A"/>
    <property type="chains" value="A=1-373"/>
</dbReference>
<dbReference type="PDB" id="3UH1">
    <property type="method" value="X-ray"/>
    <property type="resolution" value="2.17 A"/>
    <property type="chains" value="A=1-373"/>
</dbReference>
<dbReference type="PDB" id="3UHA">
    <property type="method" value="X-ray"/>
    <property type="resolution" value="2.30 A"/>
    <property type="chains" value="A/B=1-373"/>
</dbReference>
<dbReference type="PDBsum" id="2Q99"/>
<dbReference type="PDBsum" id="2QRJ"/>
<dbReference type="PDBsum" id="2QRK"/>
<dbReference type="PDBsum" id="2QRL"/>
<dbReference type="PDBsum" id="3UGK"/>
<dbReference type="PDBsum" id="3UH1"/>
<dbReference type="PDBsum" id="3UHA"/>
<dbReference type="SMR" id="P38998"/>
<dbReference type="BioGRID" id="35025">
    <property type="interactions" value="35"/>
</dbReference>
<dbReference type="DIP" id="DIP-5291N"/>
<dbReference type="FunCoup" id="P38998">
    <property type="interactions" value="291"/>
</dbReference>
<dbReference type="IntAct" id="P38998">
    <property type="interactions" value="15"/>
</dbReference>
<dbReference type="MINT" id="P38998"/>
<dbReference type="STRING" id="4932.YIR034C"/>
<dbReference type="CarbonylDB" id="P38998"/>
<dbReference type="iPTMnet" id="P38998"/>
<dbReference type="PaxDb" id="4932-YIR034C"/>
<dbReference type="PeptideAtlas" id="P38998"/>
<dbReference type="EnsemblFungi" id="YIR034C_mRNA">
    <property type="protein sequence ID" value="YIR034C"/>
    <property type="gene ID" value="YIR034C"/>
</dbReference>
<dbReference type="GeneID" id="854852"/>
<dbReference type="KEGG" id="sce:YIR034C"/>
<dbReference type="AGR" id="SGD:S000001473"/>
<dbReference type="SGD" id="S000001473">
    <property type="gene designation" value="LYS1"/>
</dbReference>
<dbReference type="VEuPathDB" id="FungiDB:YIR034C"/>
<dbReference type="eggNOG" id="KOG0172">
    <property type="taxonomic scope" value="Eukaryota"/>
</dbReference>
<dbReference type="HOGENOM" id="CLU_063085_0_0_1"/>
<dbReference type="InParanoid" id="P38998"/>
<dbReference type="OMA" id="YFFFSHT"/>
<dbReference type="OrthoDB" id="265306at2759"/>
<dbReference type="BioCyc" id="YEAST:YIR034C-MONOMER"/>
<dbReference type="BRENDA" id="1.5.1.7">
    <property type="organism ID" value="984"/>
</dbReference>
<dbReference type="SABIO-RK" id="P38998"/>
<dbReference type="UniPathway" id="UPA00033">
    <property type="reaction ID" value="UER00034"/>
</dbReference>
<dbReference type="BioGRID-ORCS" id="854852">
    <property type="hits" value="10 hits in 10 CRISPR screens"/>
</dbReference>
<dbReference type="EvolutionaryTrace" id="P38998"/>
<dbReference type="PRO" id="PR:P38998"/>
<dbReference type="Proteomes" id="UP000002311">
    <property type="component" value="Chromosome IX"/>
</dbReference>
<dbReference type="RNAct" id="P38998">
    <property type="molecule type" value="protein"/>
</dbReference>
<dbReference type="GO" id="GO:0005737">
    <property type="term" value="C:cytoplasm"/>
    <property type="evidence" value="ECO:0007005"/>
    <property type="project" value="SGD"/>
</dbReference>
<dbReference type="GO" id="GO:0005777">
    <property type="term" value="C:peroxisome"/>
    <property type="evidence" value="ECO:0007669"/>
    <property type="project" value="UniProtKB-SubCell"/>
</dbReference>
<dbReference type="GO" id="GO:0003729">
    <property type="term" value="F:mRNA binding"/>
    <property type="evidence" value="ECO:0000314"/>
    <property type="project" value="SGD"/>
</dbReference>
<dbReference type="GO" id="GO:0004754">
    <property type="term" value="F:saccharopine dehydrogenase (NAD+, L-lysine-forming) activity"/>
    <property type="evidence" value="ECO:0000314"/>
    <property type="project" value="SGD"/>
</dbReference>
<dbReference type="GO" id="GO:0004753">
    <property type="term" value="F:saccharopine dehydrogenase activity"/>
    <property type="evidence" value="ECO:0000318"/>
    <property type="project" value="GO_Central"/>
</dbReference>
<dbReference type="GO" id="GO:0009085">
    <property type="term" value="P:lysine biosynthetic process"/>
    <property type="evidence" value="ECO:0000315"/>
    <property type="project" value="SGD"/>
</dbReference>
<dbReference type="GO" id="GO:0019878">
    <property type="term" value="P:lysine biosynthetic process via aminoadipic acid"/>
    <property type="evidence" value="ECO:0000318"/>
    <property type="project" value="GO_Central"/>
</dbReference>
<dbReference type="GO" id="GO:0016558">
    <property type="term" value="P:protein import into peroxisome matrix"/>
    <property type="evidence" value="ECO:0000315"/>
    <property type="project" value="SGD"/>
</dbReference>
<dbReference type="CDD" id="cd12188">
    <property type="entry name" value="SDH"/>
    <property type="match status" value="1"/>
</dbReference>
<dbReference type="FunFam" id="3.40.50.720:FF:000217">
    <property type="entry name" value="Saccharopine dehydrogenase [NAD(+), L-lysine-forming]"/>
    <property type="match status" value="1"/>
</dbReference>
<dbReference type="FunFam" id="3.40.50.720:FF:000423">
    <property type="entry name" value="Saccharopine dehydrogenase [NAD(+), L-lysine-forming]"/>
    <property type="match status" value="1"/>
</dbReference>
<dbReference type="Gene3D" id="3.40.50.720">
    <property type="entry name" value="NAD(P)-binding Rossmann-like Domain"/>
    <property type="match status" value="2"/>
</dbReference>
<dbReference type="InterPro" id="IPR051168">
    <property type="entry name" value="AASS"/>
</dbReference>
<dbReference type="InterPro" id="IPR007886">
    <property type="entry name" value="AlaDH/PNT_N"/>
</dbReference>
<dbReference type="InterPro" id="IPR007698">
    <property type="entry name" value="AlaDH/PNT_NAD(H)-bd"/>
</dbReference>
<dbReference type="InterPro" id="IPR027281">
    <property type="entry name" value="Lys1"/>
</dbReference>
<dbReference type="InterPro" id="IPR036291">
    <property type="entry name" value="NAD(P)-bd_dom_sf"/>
</dbReference>
<dbReference type="PANTHER" id="PTHR11133">
    <property type="entry name" value="SACCHAROPINE DEHYDROGENASE"/>
    <property type="match status" value="1"/>
</dbReference>
<dbReference type="PANTHER" id="PTHR11133:SF23">
    <property type="entry name" value="SACCHAROPINE DEHYDROGENASE [NAD(+), L-LYSINE-FORMING]"/>
    <property type="match status" value="1"/>
</dbReference>
<dbReference type="Pfam" id="PF05222">
    <property type="entry name" value="AlaDh_PNT_N"/>
    <property type="match status" value="1"/>
</dbReference>
<dbReference type="PIRSF" id="PIRSF018250">
    <property type="entry name" value="Saccharopine_DH_Lys"/>
    <property type="match status" value="1"/>
</dbReference>
<dbReference type="SMART" id="SM01002">
    <property type="entry name" value="AlaDh_PNT_C"/>
    <property type="match status" value="1"/>
</dbReference>
<dbReference type="SMART" id="SM01003">
    <property type="entry name" value="AlaDh_PNT_N"/>
    <property type="match status" value="1"/>
</dbReference>
<dbReference type="SUPFAM" id="SSF52283">
    <property type="entry name" value="Formate/glycerate dehydrogenase catalytic domain-like"/>
    <property type="match status" value="1"/>
</dbReference>
<dbReference type="SUPFAM" id="SSF51735">
    <property type="entry name" value="NAD(P)-binding Rossmann-fold domains"/>
    <property type="match status" value="1"/>
</dbReference>
<feature type="initiator methionine" description="Removed" evidence="11 16">
    <location>
        <position position="1"/>
    </location>
</feature>
<feature type="chain" id="PRO_0000199016" description="Saccharopine dehydrogenase [NAD(+), L-lysine-forming]">
    <location>
        <begin position="2"/>
        <end position="373"/>
    </location>
</feature>
<feature type="short sequence motif" description="Microbody targeting signal" evidence="1 19">
    <location>
        <begin position="371"/>
        <end position="373"/>
    </location>
</feature>
<feature type="active site" description="Proton acceptor" evidence="6 21">
    <location>
        <position position="77"/>
    </location>
</feature>
<feature type="active site" description="Proton donor" evidence="6 21">
    <location>
        <position position="96"/>
    </location>
</feature>
<feature type="binding site" evidence="6 21 27">
    <location>
        <position position="18"/>
    </location>
    <ligand>
        <name>L-saccharopine</name>
        <dbReference type="ChEBI" id="CHEBI:57951"/>
    </ligand>
</feature>
<feature type="binding site" evidence="6 21 27">
    <location>
        <position position="77"/>
    </location>
    <ligand>
        <name>L-saccharopine</name>
        <dbReference type="ChEBI" id="CHEBI:57951"/>
    </ligand>
</feature>
<feature type="binding site" evidence="27">
    <location>
        <position position="101"/>
    </location>
    <ligand>
        <name>L-saccharopine</name>
        <dbReference type="ChEBI" id="CHEBI:57951"/>
    </ligand>
</feature>
<feature type="binding site" evidence="28">
    <location>
        <position position="130"/>
    </location>
    <ligand>
        <name>NAD(+)</name>
        <dbReference type="ChEBI" id="CHEBI:57540"/>
    </ligand>
</feature>
<feature type="binding site" evidence="6 21 27">
    <location>
        <position position="131"/>
    </location>
    <ligand>
        <name>L-saccharopine</name>
        <dbReference type="ChEBI" id="CHEBI:57951"/>
    </ligand>
</feature>
<feature type="binding site" evidence="27">
    <location>
        <position position="135"/>
    </location>
    <ligand>
        <name>L-saccharopine</name>
        <dbReference type="ChEBI" id="CHEBI:57951"/>
    </ligand>
</feature>
<feature type="binding site" evidence="6 21 27 28">
    <location>
        <begin position="203"/>
        <end position="204"/>
    </location>
    <ligand>
        <name>NAD(+)</name>
        <dbReference type="ChEBI" id="CHEBI:57540"/>
    </ligand>
</feature>
<feature type="binding site" evidence="6 21 27 28">
    <location>
        <position position="227"/>
    </location>
    <ligand>
        <name>NAD(+)</name>
        <dbReference type="ChEBI" id="CHEBI:57540"/>
    </ligand>
</feature>
<feature type="binding site" evidence="6 21 27 28">
    <location>
        <position position="231"/>
    </location>
    <ligand>
        <name>NAD(+)</name>
        <dbReference type="ChEBI" id="CHEBI:57540"/>
    </ligand>
</feature>
<feature type="binding site" evidence="27">
    <location>
        <position position="251"/>
    </location>
    <ligand>
        <name>NAD(+)</name>
        <dbReference type="ChEBI" id="CHEBI:57540"/>
    </ligand>
</feature>
<feature type="binding site" evidence="6 27 28">
    <location>
        <position position="278"/>
    </location>
    <ligand>
        <name>NAD(+)</name>
        <dbReference type="ChEBI" id="CHEBI:57540"/>
    </ligand>
</feature>
<feature type="binding site" evidence="27">
    <location>
        <begin position="279"/>
        <end position="281"/>
    </location>
    <ligand>
        <name>L-saccharopine</name>
        <dbReference type="ChEBI" id="CHEBI:57951"/>
    </ligand>
</feature>
<feature type="binding site" evidence="6 27 28">
    <location>
        <begin position="318"/>
        <end position="321"/>
    </location>
    <ligand>
        <name>NAD(+)</name>
        <dbReference type="ChEBI" id="CHEBI:57540"/>
    </ligand>
</feature>
<feature type="modified residue" description="N-acetylalanine; partial" evidence="16">
    <location>
        <position position="2"/>
    </location>
</feature>
<feature type="disulfide bond" evidence="4 5 24 25 26">
    <location>
        <begin position="205"/>
        <end position="249"/>
    </location>
</feature>
<feature type="mutagenesis site" description="Decreases the turnover number 145-fold. Decreases the turnover number 700-fold; when associated with Gln-96." evidence="6">
    <original>K</original>
    <variation>M</variation>
    <location>
        <position position="77"/>
    </location>
</feature>
<feature type="mutagenesis site" description="Decreases the turnover number 28-fold. Decreases the turnover number 700-fold; when associated with Met-77." evidence="6">
    <original>H</original>
    <variation>Q</variation>
    <location>
        <position position="96"/>
    </location>
</feature>
<feature type="mutagenesis site" description="Prevents disulfide formation." evidence="6">
    <original>C</original>
    <variation>S</variation>
    <location>
        <position position="205"/>
    </location>
</feature>
<feature type="sequence conflict" description="In Ref. 6; AA sequence." evidence="18" ref="6">
    <original>A</original>
    <variation>AL</variation>
    <location>
        <position position="209"/>
    </location>
</feature>
<feature type="sequence conflict" description="In Ref. 1; CAA54551." evidence="18" ref="1">
    <original>A</original>
    <variation>V</variation>
    <location>
        <position position="309"/>
    </location>
</feature>
<feature type="strand" evidence="29">
    <location>
        <begin position="5"/>
        <end position="8"/>
    </location>
</feature>
<feature type="helix" evidence="29">
    <location>
        <begin position="23"/>
        <end position="31"/>
    </location>
</feature>
<feature type="strand" evidence="29">
    <location>
        <begin position="35"/>
        <end position="39"/>
    </location>
</feature>
<feature type="strand" evidence="30">
    <location>
        <begin position="44"/>
        <end position="46"/>
    </location>
</feature>
<feature type="helix" evidence="29">
    <location>
        <begin position="48"/>
        <end position="53"/>
    </location>
</feature>
<feature type="strand" evidence="29">
    <location>
        <begin position="57"/>
        <end position="59"/>
    </location>
</feature>
<feature type="helix" evidence="29">
    <location>
        <begin position="63"/>
        <end position="66"/>
    </location>
</feature>
<feature type="strand" evidence="29">
    <location>
        <begin position="71"/>
        <end position="74"/>
    </location>
</feature>
<feature type="strand" evidence="29">
    <location>
        <begin position="89"/>
        <end position="93"/>
    </location>
</feature>
<feature type="helix" evidence="29">
    <location>
        <begin position="104"/>
        <end position="114"/>
    </location>
</feature>
<feature type="strand" evidence="29">
    <location>
        <begin position="117"/>
        <end position="120"/>
    </location>
</feature>
<feature type="helix" evidence="29">
    <location>
        <begin position="121"/>
        <end position="123"/>
    </location>
</feature>
<feature type="strand" evidence="31">
    <location>
        <begin position="131"/>
        <end position="133"/>
    </location>
</feature>
<feature type="helix" evidence="29">
    <location>
        <begin position="136"/>
        <end position="156"/>
    </location>
</feature>
<feature type="helix" evidence="29">
    <location>
        <begin position="172"/>
        <end position="187"/>
    </location>
</feature>
<feature type="turn" evidence="29">
    <location>
        <begin position="188"/>
        <end position="190"/>
    </location>
</feature>
<feature type="strand" evidence="29">
    <location>
        <begin position="196"/>
        <end position="200"/>
    </location>
</feature>
<feature type="helix" evidence="29">
    <location>
        <begin position="204"/>
        <end position="215"/>
    </location>
</feature>
<feature type="helix" evidence="29">
    <location>
        <begin position="220"/>
        <end position="222"/>
    </location>
</feature>
<feature type="strand" evidence="29">
    <location>
        <begin position="223"/>
        <end position="226"/>
    </location>
</feature>
<feature type="helix" evidence="29">
    <location>
        <begin position="228"/>
        <end position="231"/>
    </location>
</feature>
<feature type="helix" evidence="29">
    <location>
        <begin position="239"/>
        <end position="242"/>
    </location>
</feature>
<feature type="strand" evidence="29">
    <location>
        <begin position="243"/>
        <end position="248"/>
    </location>
</feature>
<feature type="helix" evidence="29">
    <location>
        <begin position="262"/>
        <end position="265"/>
    </location>
</feature>
<feature type="strand" evidence="29">
    <location>
        <begin position="274"/>
        <end position="277"/>
    </location>
</feature>
<feature type="strand" evidence="29">
    <location>
        <begin position="303"/>
        <end position="305"/>
    </location>
</feature>
<feature type="strand" evidence="29">
    <location>
        <begin position="308"/>
        <end position="311"/>
    </location>
</feature>
<feature type="strand" evidence="29">
    <location>
        <begin position="313"/>
        <end position="316"/>
    </location>
</feature>
<feature type="helix" evidence="29">
    <location>
        <begin position="321"/>
        <end position="324"/>
    </location>
</feature>
<feature type="helix" evidence="29">
    <location>
        <begin position="326"/>
        <end position="342"/>
    </location>
</feature>
<feature type="turn" evidence="29">
    <location>
        <begin position="345"/>
        <end position="349"/>
    </location>
</feature>
<feature type="helix" evidence="29">
    <location>
        <begin position="351"/>
        <end position="365"/>
    </location>
</feature>
<feature type="helix" evidence="30">
    <location>
        <begin position="370"/>
        <end position="372"/>
    </location>
</feature>
<protein>
    <recommendedName>
        <fullName evidence="17">Saccharopine dehydrogenase [NAD(+), L-lysine-forming]</fullName>
        <shortName>SDH</shortName>
        <ecNumber evidence="3 12 13">1.5.1.7</ecNumber>
    </recommendedName>
    <alternativeName>
        <fullName>Lysine--2-oxoglutarate reductase</fullName>
    </alternativeName>
</protein>
<evidence type="ECO:0000255" key="1"/>
<evidence type="ECO:0000269" key="2">
    <source>
    </source>
</evidence>
<evidence type="ECO:0000269" key="3">
    <source>
    </source>
</evidence>
<evidence type="ECO:0000269" key="4">
    <source>
    </source>
</evidence>
<evidence type="ECO:0000269" key="5">
    <source>
    </source>
</evidence>
<evidence type="ECO:0000269" key="6">
    <source>
    </source>
</evidence>
<evidence type="ECO:0000269" key="7">
    <source>
    </source>
</evidence>
<evidence type="ECO:0000269" key="8">
    <source>
    </source>
</evidence>
<evidence type="ECO:0000269" key="9">
    <source>
    </source>
</evidence>
<evidence type="ECO:0000269" key="10">
    <source>
    </source>
</evidence>
<evidence type="ECO:0000269" key="11">
    <source>
    </source>
</evidence>
<evidence type="ECO:0000269" key="12">
    <source>
    </source>
</evidence>
<evidence type="ECO:0000269" key="13">
    <source>
    </source>
</evidence>
<evidence type="ECO:0000269" key="14">
    <source>
    </source>
</evidence>
<evidence type="ECO:0000269" key="15">
    <source>
    </source>
</evidence>
<evidence type="ECO:0000269" key="16">
    <source ref="4"/>
</evidence>
<evidence type="ECO:0000303" key="17">
    <source>
    </source>
</evidence>
<evidence type="ECO:0000305" key="18"/>
<evidence type="ECO:0000305" key="19">
    <source>
    </source>
</evidence>
<evidence type="ECO:0000305" key="20">
    <source>
    </source>
</evidence>
<evidence type="ECO:0000305" key="21">
    <source>
    </source>
</evidence>
<evidence type="ECO:0000305" key="22">
    <source>
    </source>
</evidence>
<evidence type="ECO:0000312" key="23">
    <source>
        <dbReference type="SGD" id="S000001473"/>
    </source>
</evidence>
<evidence type="ECO:0007744" key="24">
    <source>
        <dbReference type="PDB" id="2Q99"/>
    </source>
</evidence>
<evidence type="ECO:0007744" key="25">
    <source>
        <dbReference type="PDB" id="2QRJ"/>
    </source>
</evidence>
<evidence type="ECO:0007744" key="26">
    <source>
        <dbReference type="PDB" id="2QRL"/>
    </source>
</evidence>
<evidence type="ECO:0007744" key="27">
    <source>
        <dbReference type="PDB" id="3UH1"/>
    </source>
</evidence>
<evidence type="ECO:0007744" key="28">
    <source>
        <dbReference type="PDB" id="3UHA"/>
    </source>
</evidence>
<evidence type="ECO:0007829" key="29">
    <source>
        <dbReference type="PDB" id="2QRJ"/>
    </source>
</evidence>
<evidence type="ECO:0007829" key="30">
    <source>
        <dbReference type="PDB" id="2QRL"/>
    </source>
</evidence>
<evidence type="ECO:0007829" key="31">
    <source>
        <dbReference type="PDB" id="3UHA"/>
    </source>
</evidence>
<gene>
    <name evidence="23" type="primary">LYS1</name>
    <name evidence="23" type="ordered locus">YIR034C</name>
</gene>
<sequence>MAAVTLHLRAETKPLEARAALTPTTVKKLIAKGFKIYVEDSPQSTFNINEYRQAGAIIVPAGSWKTAPRDRIIIGLKEMPETDTFPLVHEHIQFAHCYKDQAGWQNVLMRFIKGHGTLYDLEFLENDQGRRVAAFGFYAGFAGAALGVRDWAFKQTHSDDEDLPAVSPYPNEKALVKDVTKDYKEALATGARKPTVLIIGALGRCGSGAIDLLHKVGIPDANILKWDIKETSRGGPFDEIPQADIFINCIYLSKPIAPFTNMEKLNNPNRRLRTVVDVSADTTNPHNPIPIYTVATVFNKPTVLVPTTAGPKLSVISIDHLPSLLPREASEFFSHDLLPSLELLPQRKTAPVWVRAKKLFDRHCARVKRSSRL</sequence>
<comment type="function">
    <text evidence="3 12">Catalyzes the NAD(+)-dependent cleavage of saccharopine to L-lysine and 2-oxoglutarate, the final step in the alpha-aminoadipate (AAA) pathway for lysine biosynthesis.</text>
</comment>
<comment type="catalytic activity">
    <reaction evidence="3 12 13">
        <text>L-saccharopine + NAD(+) + H2O = L-lysine + 2-oxoglutarate + NADH + H(+)</text>
        <dbReference type="Rhea" id="RHEA:12440"/>
        <dbReference type="ChEBI" id="CHEBI:15377"/>
        <dbReference type="ChEBI" id="CHEBI:15378"/>
        <dbReference type="ChEBI" id="CHEBI:16810"/>
        <dbReference type="ChEBI" id="CHEBI:32551"/>
        <dbReference type="ChEBI" id="CHEBI:57540"/>
        <dbReference type="ChEBI" id="CHEBI:57945"/>
        <dbReference type="ChEBI" id="CHEBI:57951"/>
        <dbReference type="EC" id="1.5.1.7"/>
    </reaction>
</comment>
<comment type="activity regulation">
    <text evidence="10 11 14 15">Inhibited by p-chloromercuribenzoate and iodoacetate by modification of the active site cysteine residue. Inhibited by diethyl pyrocarbonate by modification of histidine residues. Inhibited by pyridoxal 5'-phosphate by modification of an essential lysine residue.</text>
</comment>
<comment type="biophysicochemical properties">
    <kinetics>
        <KM evidence="13">0.089 mM for NADH (at pH 6.8 and 22 degrees Celsius)</KM>
        <KM evidence="13">0.1 mM for NAD(+) (at pH 6.8 and 22 degrees Celsius)</KM>
        <KM evidence="13">1.67 mM for saccharopine (at pH 6.8 and 22 degrees Celsius)</KM>
        <KM evidence="13">0.55 mM for 2-oxoglutarate (at pH 6.8 and 22 degrees Celsius)</KM>
        <KM evidence="13">2 mM for L-lysine (at pH 6.8 and 22 degrees Celsius)</KM>
        <KM evidence="3">0.019 mM for NADH (at pH 7 and 25 degrees Celsius)</KM>
        <KM evidence="3">0.9 mM for NAD(+) (at pH 7 and 25 degrees Celsius)</KM>
        <KM evidence="3">6.7 mM for saccharopine (at pH 7 and 25 degrees Celsius)</KM>
        <KM evidence="3">0.11 mM for 2-oxoglutarate (at pH 7 and 25 degrees Celsius)</KM>
        <KM evidence="3">1.1 mM for L-lysine (at pH 7 and 25 degrees Celsius)</KM>
    </kinetics>
    <phDependence>
        <text evidence="12">Optimum pH is 10 for the forward reaction, and 6.5-7 for the reverse reaction.</text>
    </phDependence>
</comment>
<comment type="pathway">
    <text evidence="22">Amino-acid biosynthesis; L-lysine biosynthesis via AAA pathway; L-lysine from L-alpha-aminoadipate (fungal route): step 3/3.</text>
</comment>
<comment type="subunit">
    <text evidence="11">Monomer.</text>
</comment>
<comment type="interaction">
    <interactant intactId="EBI-10264">
        <id>P38998</id>
    </interactant>
    <interactant intactId="EBI-16219">
        <id>P39940</id>
        <label>RSP5</label>
    </interactant>
    <organismsDiffer>false</organismsDiffer>
    <experiments>3</experiments>
</comment>
<comment type="subcellular location">
    <subcellularLocation>
        <location evidence="7 8">Peroxisome</location>
    </subcellularLocation>
</comment>
<comment type="induction">
    <text evidence="9">Induced by alpha-aminoadipate semialdehyde in a LYS14-dependent manner. Repressed by lysine.</text>
</comment>
<comment type="miscellaneous">
    <text evidence="2">Present with 111934 molecules/cell in log phase SD medium.</text>
</comment>
<comment type="similarity">
    <text evidence="18">Belongs to the AlaDH/PNT family.</text>
</comment>
<comment type="caution">
    <text evidence="20">PubMed:10077615 shows data confirming the peroxisomal localization of the protein, however this study was later retracted as the images were additionally used in other articles for other proteins.</text>
</comment>
<accession>P38998</accession>
<accession>D6VVW5</accession>
<keyword id="KW-0002">3D-structure</keyword>
<keyword id="KW-0007">Acetylation</keyword>
<keyword id="KW-0028">Amino-acid biosynthesis</keyword>
<keyword id="KW-0903">Direct protein sequencing</keyword>
<keyword id="KW-1015">Disulfide bond</keyword>
<keyword id="KW-0457">Lysine biosynthesis</keyword>
<keyword id="KW-0520">NAD</keyword>
<keyword id="KW-0560">Oxidoreductase</keyword>
<keyword id="KW-0576">Peroxisome</keyword>
<keyword id="KW-1185">Reference proteome</keyword>
<reference key="1">
    <citation type="submission" date="1994-01" db="EMBL/GenBank/DDBJ databases">
        <authorList>
            <person name="Feller A."/>
        </authorList>
    </citation>
    <scope>NUCLEOTIDE SEQUENCE [GENOMIC DNA]</scope>
    <source>
        <strain>Sigma 1278B</strain>
    </source>
</reference>
<reference key="2">
    <citation type="journal article" date="1997" name="Nature">
        <title>The nucleotide sequence of Saccharomyces cerevisiae chromosome IX.</title>
        <authorList>
            <person name="Churcher C.M."/>
            <person name="Bowman S."/>
            <person name="Badcock K."/>
            <person name="Bankier A.T."/>
            <person name="Brown D."/>
            <person name="Chillingworth T."/>
            <person name="Connor R."/>
            <person name="Devlin K."/>
            <person name="Gentles S."/>
            <person name="Hamlin N."/>
            <person name="Harris D.E."/>
            <person name="Horsnell T."/>
            <person name="Hunt S."/>
            <person name="Jagels K."/>
            <person name="Jones M."/>
            <person name="Lye G."/>
            <person name="Moule S."/>
            <person name="Odell C."/>
            <person name="Pearson D."/>
            <person name="Rajandream M.A."/>
            <person name="Rice P."/>
            <person name="Rowley N."/>
            <person name="Skelton J."/>
            <person name="Smith V."/>
            <person name="Walsh S.V."/>
            <person name="Whitehead S."/>
            <person name="Barrell B.G."/>
        </authorList>
    </citation>
    <scope>NUCLEOTIDE SEQUENCE [LARGE SCALE GENOMIC DNA]</scope>
    <source>
        <strain>ATCC 204508 / S288c</strain>
    </source>
</reference>
<reference key="3">
    <citation type="journal article" date="2014" name="G3 (Bethesda)">
        <title>The reference genome sequence of Saccharomyces cerevisiae: Then and now.</title>
        <authorList>
            <person name="Engel S.R."/>
            <person name="Dietrich F.S."/>
            <person name="Fisk D.G."/>
            <person name="Binkley G."/>
            <person name="Balakrishnan R."/>
            <person name="Costanzo M.C."/>
            <person name="Dwight S.S."/>
            <person name="Hitz B.C."/>
            <person name="Karra K."/>
            <person name="Nash R.S."/>
            <person name="Weng S."/>
            <person name="Wong E.D."/>
            <person name="Lloyd P."/>
            <person name="Skrzypek M.S."/>
            <person name="Miyasato S.R."/>
            <person name="Simison M."/>
            <person name="Cherry J.M."/>
        </authorList>
    </citation>
    <scope>GENOME REANNOTATION</scope>
    <source>
        <strain>ATCC 204508 / S288c</strain>
    </source>
</reference>
<reference key="4">
    <citation type="submission" date="2005-06" db="UniProtKB">
        <authorList>
            <person name="Bienvenut W.V."/>
            <person name="Peters C."/>
        </authorList>
    </citation>
    <scope>PROTEIN SEQUENCE OF 2-9; 36-65; 132-149; 193-204; 216-225 AND 313-327</scope>
    <scope>CLEAVAGE OF INITIATOR METHIONINE</scope>
    <scope>ACETYLATION AT ALA-2</scope>
    <scope>IDENTIFICATION BY MASS SPECTROMETRY</scope>
</reference>
<reference key="5">
    <citation type="journal article" date="1978" name="J. Biol. Chem.">
        <title>Purification and characterization of saccharopine dehydrogenase from baker's yeast.</title>
        <authorList>
            <person name="Ogawa H."/>
            <person name="Fujioka M."/>
        </authorList>
    </citation>
    <scope>PROTEIN SEQUENCE OF 2-3</scope>
    <scope>CLEAVAGE OF INITIATOR METHIONINE</scope>
    <scope>SUBUNIT</scope>
    <scope>ACTIVITY REGULATION</scope>
</reference>
<reference key="6">
    <citation type="journal article" date="1980" name="Biochim. Biophys. Acta">
        <title>Amino acid sequence of a peptide containing an essential cysteine residue of yeast saccharopine dehydrogenase (L-lysine-forming).</title>
        <authorList>
            <person name="Ogawa H."/>
            <person name="Hase T."/>
            <person name="Fujioka M."/>
        </authorList>
    </citation>
    <scope>PROTEIN SEQUENCE OF 203-212</scope>
</reference>
<reference key="7">
    <citation type="journal article" date="1966" name="J. Biol. Chem.">
        <title>Saccharopine, an intermediate of the aminoadipic acid pathway of lysine biosynthesis. IV. Saccharopine dehydrogenase.</title>
        <authorList>
            <person name="Saunders P.P."/>
            <person name="Broquist H.P."/>
        </authorList>
    </citation>
    <scope>FUNCTION</scope>
    <scope>BIOPHYSICOCHEMICAL PROPERTIES</scope>
    <scope>PATHWAY</scope>
</reference>
<reference key="8">
    <citation type="journal article" date="1970" name="Eur. J. Biochem.">
        <title>A kinetic study of saccharopine dehydrogenase reaction.</title>
        <authorList>
            <person name="Fujioka M."/>
            <person name="Nakatani Y."/>
        </authorList>
    </citation>
    <scope>BIOPHYSICOCHEMICAL PROPERTIES</scope>
</reference>
<reference key="9">
    <citation type="journal article" date="1979" name="J. Biol. Chem.">
        <title>Chemical modification of the active site sulfhydryl group of saccharopine dehydrogenase (L-lysine-forming).</title>
        <authorList>
            <person name="Ogawa H."/>
            <person name="Okamoto M."/>
            <person name="Fujioka M."/>
        </authorList>
    </citation>
    <scope>ACTIVITY REGULATION</scope>
</reference>
<reference key="10">
    <citation type="journal article" date="1980" name="J. Biol. Chem.">
        <title>The inactivation of saccharopine dehydrogenase (L-lysine-forming) by diethyl pyrocarbonate.</title>
        <authorList>
            <person name="Fujioka M."/>
            <person name="Takata Y."/>
            <person name="Ogawa H."/>
            <person name="Okamoto M."/>
        </authorList>
    </citation>
    <scope>ACTIVITY REGULATION</scope>
</reference>
<reference key="11">
    <citation type="journal article" date="1980" name="J. Biol. Chem.">
        <title>The reaction of pyridoxal 5'-phosphate with an essential lysine residue of saccharopine dehydrogenase (L-lysine-forming).</title>
        <authorList>
            <person name="Ogawa H."/>
            <person name="Fujioka M."/>
        </authorList>
    </citation>
    <scope>ACTIVITY REGULATION</scope>
</reference>
<reference key="12">
    <citation type="journal article" date="1988" name="Eur. J. Biochem.">
        <title>Control of enzyme synthesis in the lysine biosynthetic pathway of Saccharomyces cerevisiae. Evidence for a regulatory role of gene LYS14.</title>
        <authorList>
            <person name="Ramos F."/>
            <person name="Dubois E."/>
            <person name="Pierard A."/>
        </authorList>
    </citation>
    <scope>INDUCTION</scope>
</reference>
<reference key="13">
    <citation type="journal article" date="1999" name="Proc. Natl. Acad. Sci. U.S.A.">
        <title>Detecting patterns of protein distribution and gene expression in silico.</title>
        <authorList>
            <person name="Geraghty M.T."/>
            <person name="Bassett D."/>
            <person name="Morrell J.C."/>
            <person name="Gatto G.J. Jr."/>
            <person name="Bai J."/>
            <person name="Geisbrecht B.V."/>
            <person name="Hieter P."/>
            <person name="Gould S.J."/>
        </authorList>
    </citation>
    <scope>RETRACTED PAPER</scope>
</reference>
<reference key="14">
    <citation type="journal article" date="2005" name="Proc. Natl. Acad. Sci. U.S.A.">
        <authorList>
            <person name="Bassett D."/>
            <person name="Morrell J.C."/>
            <person name="Gatto G.J. Jr."/>
            <person name="Bai J."/>
            <person name="Geisbrecht B.V."/>
            <person name="Hieter P."/>
            <person name="Gould S.J."/>
        </authorList>
    </citation>
    <scope>RETRACTION NOTICE OF PUBMED:10077615</scope>
</reference>
<reference key="15">
    <citation type="journal article" date="2003" name="Nature">
        <title>Global analysis of protein expression in yeast.</title>
        <authorList>
            <person name="Ghaemmaghami S."/>
            <person name="Huh W.-K."/>
            <person name="Bower K."/>
            <person name="Howson R.W."/>
            <person name="Belle A."/>
            <person name="Dephoure N."/>
            <person name="O'Shea E.K."/>
            <person name="Weissman J.S."/>
        </authorList>
    </citation>
    <scope>LEVEL OF PROTEIN EXPRESSION [LARGE SCALE ANALYSIS]</scope>
</reference>
<reference key="16">
    <citation type="journal article" date="2006" name="Biochemistry">
        <title>Overall kinetic mechanism of saccharopine dehydrogenase from Saccharomyces cerevisiae.</title>
        <authorList>
            <person name="Xu H."/>
            <person name="West A.H."/>
            <person name="Cook P.F."/>
        </authorList>
    </citation>
    <scope>FUNCTION</scope>
    <scope>CATALYTIC ACTIVITY</scope>
    <scope>BIOPHYSICOCHEMICAL PROPERTIES</scope>
</reference>
<reference key="17">
    <citation type="journal article" date="2012" name="Proc. Natl. Acad. Sci. U.S.A.">
        <title>N-terminal acetylome analyses and functional insights of the N-terminal acetyltransferase NatB.</title>
        <authorList>
            <person name="Van Damme P."/>
            <person name="Lasa M."/>
            <person name="Polevoda B."/>
            <person name="Gazquez C."/>
            <person name="Elosegui-Artola A."/>
            <person name="Kim D.S."/>
            <person name="De Juan-Pardo E."/>
            <person name="Demeyer K."/>
            <person name="Hole K."/>
            <person name="Larrea E."/>
            <person name="Timmerman E."/>
            <person name="Prieto J."/>
            <person name="Arnesen T."/>
            <person name="Sherman F."/>
            <person name="Gevaert K."/>
            <person name="Aldabe R."/>
        </authorList>
    </citation>
    <scope>IDENTIFICATION BY MASS SPECTROMETRY [LARGE SCALE ANALYSIS]</scope>
</reference>
<reference key="18">
    <citation type="journal article" date="2016" name="Nat. Methods">
        <title>One library to make them all: streamlining the creation of yeast libraries via a SWAp-Tag strategy.</title>
        <authorList>
            <person name="Yofe I."/>
            <person name="Weill U."/>
            <person name="Meurer M."/>
            <person name="Chuartzman S."/>
            <person name="Zalckvar E."/>
            <person name="Goldman O."/>
            <person name="Ben-Dor S."/>
            <person name="Schuetze C."/>
            <person name="Wiedemann N."/>
            <person name="Knop M."/>
            <person name="Khmelinskii A."/>
            <person name="Schuldiner M."/>
        </authorList>
    </citation>
    <scope>SUBCELLULAR LOCATION [LARGE SCALE ANALYSIS]</scope>
</reference>
<reference key="19">
    <citation type="journal article" date="2017" name="Sci. Rep.">
        <title>Two NAD-linked redox shuttles maintain the peroxisomal redox balance in Saccharomyces cerevisiae.</title>
        <authorList>
            <person name="Al-Saryi N.A."/>
            <person name="Al-Hejjaj M.Y."/>
            <person name="van Roermund C.W.T."/>
            <person name="Hulmes G.E."/>
            <person name="Ekal L."/>
            <person name="Payton C."/>
            <person name="Wanders R.J.A."/>
            <person name="Hettema E.H."/>
        </authorList>
    </citation>
    <scope>SUBCELLULAR LOCATION</scope>
</reference>
<reference key="20">
    <citation type="journal article" date="2007" name="Biochemistry">
        <title>Crystal structures of ligand-bound saccharopine dehydrogenase from Saccharomyces cerevisiae.</title>
        <authorList>
            <person name="Andi B."/>
            <person name="Xu H."/>
            <person name="Cook P.F."/>
            <person name="West A.H."/>
        </authorList>
    </citation>
    <scope>X-RAY CRYSTALLOGRAPHY (1.60 ANGSTROMS) OF 1-373 IN COMPLEX WITH AMP AND SUBSTRATE ANALOG</scope>
    <scope>DISULFIDE BOND</scope>
</reference>
<reference key="21">
    <citation type="journal article" date="2007" name="J. Mol. Biol.">
        <title>Structural studies of the final enzyme in the alpha-aminoadipate pathway-saccharopine dehydrogenase from Saccharomyces cerevisiae.</title>
        <authorList>
            <person name="Burk D.L."/>
            <person name="Hwang J."/>
            <person name="Kwok E."/>
            <person name="Marrone L."/>
            <person name="Goodfellow V."/>
            <person name="Dmitrienko G.I."/>
            <person name="Berghuis A.M."/>
        </authorList>
    </citation>
    <scope>X-RAY CRYSTALLOGRAPHY (1.64 ANGSTROMS) OF 1-373</scope>
    <scope>DISULFIDE BOND</scope>
</reference>
<reference key="22">
    <citation type="journal article" date="2012" name="Biochemistry">
        <title>Evidence in support of lysine 77 and histidine 96 as acid-base catalytic residues in saccharopine dehydrogenase from Saccharomyces cerevisiae.</title>
        <authorList>
            <person name="Kumar V.P."/>
            <person name="Thomas L.M."/>
            <person name="Bobyk K.D."/>
            <person name="Andi B."/>
            <person name="Cook P.F."/>
            <person name="West A.H."/>
        </authorList>
    </citation>
    <scope>X-RAY CRYSTALLOGRAPHY (2.01 ANGSTROMS) OF 1-373 IN COMPLEX WITH L-SACCHAROPINE AND NAD</scope>
    <scope>ACTIVE SITE</scope>
    <scope>MUTAGENESIS OF LYS-77; HIS-96 AND CYS-205</scope>
</reference>
<organism>
    <name type="scientific">Saccharomyces cerevisiae (strain ATCC 204508 / S288c)</name>
    <name type="common">Baker's yeast</name>
    <dbReference type="NCBI Taxonomy" id="559292"/>
    <lineage>
        <taxon>Eukaryota</taxon>
        <taxon>Fungi</taxon>
        <taxon>Dikarya</taxon>
        <taxon>Ascomycota</taxon>
        <taxon>Saccharomycotina</taxon>
        <taxon>Saccharomycetes</taxon>
        <taxon>Saccharomycetales</taxon>
        <taxon>Saccharomycetaceae</taxon>
        <taxon>Saccharomyces</taxon>
    </lineage>
</organism>
<proteinExistence type="evidence at protein level"/>